<proteinExistence type="inferred from homology"/>
<evidence type="ECO:0000255" key="1">
    <source>
        <dbReference type="HAMAP-Rule" id="MF_00443"/>
    </source>
</evidence>
<sequence>MLNIGPFSFHSRLLLGTGKFPDFDVQQKAIDVSEAEVLTFAVRRMDIFDAKQPNLLEKLDVKKYKLLPNTAGAKNAEEAVRIAKLAKASGLCDMIKVEVIGDDRTLLPDPVETLRASEMLLEEGFIVLPYTSDDVVLARKLQELGVHAIMPGASPIGSGLGIVNPLNLSFIIEQATVPVIVDAGIGSPADAAFAMELGADGVLLNTAVSGAKDPIKMAQAMKLSIEAGRLGFEAGRIARKRCATASSPLEGMSVVE</sequence>
<gene>
    <name evidence="1" type="primary">thiG</name>
    <name type="ordered locus">BAMEG_3827</name>
</gene>
<protein>
    <recommendedName>
        <fullName evidence="1">Thiazole synthase</fullName>
        <ecNumber evidence="1">2.8.1.10</ecNumber>
    </recommendedName>
</protein>
<organism>
    <name type="scientific">Bacillus anthracis (strain CDC 684 / NRRL 3495)</name>
    <dbReference type="NCBI Taxonomy" id="568206"/>
    <lineage>
        <taxon>Bacteria</taxon>
        <taxon>Bacillati</taxon>
        <taxon>Bacillota</taxon>
        <taxon>Bacilli</taxon>
        <taxon>Bacillales</taxon>
        <taxon>Bacillaceae</taxon>
        <taxon>Bacillus</taxon>
        <taxon>Bacillus cereus group</taxon>
    </lineage>
</organism>
<feature type="chain" id="PRO_1000196836" description="Thiazole synthase">
    <location>
        <begin position="1"/>
        <end position="256"/>
    </location>
</feature>
<feature type="active site" description="Schiff-base intermediate with DXP" evidence="1">
    <location>
        <position position="96"/>
    </location>
</feature>
<feature type="binding site" evidence="1">
    <location>
        <position position="157"/>
    </location>
    <ligand>
        <name>1-deoxy-D-xylulose 5-phosphate</name>
        <dbReference type="ChEBI" id="CHEBI:57792"/>
    </ligand>
</feature>
<feature type="binding site" evidence="1">
    <location>
        <begin position="183"/>
        <end position="184"/>
    </location>
    <ligand>
        <name>1-deoxy-D-xylulose 5-phosphate</name>
        <dbReference type="ChEBI" id="CHEBI:57792"/>
    </ligand>
</feature>
<feature type="binding site" evidence="1">
    <location>
        <begin position="205"/>
        <end position="206"/>
    </location>
    <ligand>
        <name>1-deoxy-D-xylulose 5-phosphate</name>
        <dbReference type="ChEBI" id="CHEBI:57792"/>
    </ligand>
</feature>
<keyword id="KW-0963">Cytoplasm</keyword>
<keyword id="KW-0704">Schiff base</keyword>
<keyword id="KW-0784">Thiamine biosynthesis</keyword>
<keyword id="KW-0808">Transferase</keyword>
<dbReference type="EC" id="2.8.1.10" evidence="1"/>
<dbReference type="EMBL" id="CP001215">
    <property type="protein sequence ID" value="ACP12226.1"/>
    <property type="molecule type" value="Genomic_DNA"/>
</dbReference>
<dbReference type="RefSeq" id="WP_000931993.1">
    <property type="nucleotide sequence ID" value="NC_012581.1"/>
</dbReference>
<dbReference type="SMR" id="C3LFA6"/>
<dbReference type="GeneID" id="45020812"/>
<dbReference type="KEGG" id="bah:BAMEG_3827"/>
<dbReference type="HOGENOM" id="CLU_062233_1_0_9"/>
<dbReference type="UniPathway" id="UPA00060"/>
<dbReference type="GO" id="GO:0005737">
    <property type="term" value="C:cytoplasm"/>
    <property type="evidence" value="ECO:0007669"/>
    <property type="project" value="UniProtKB-SubCell"/>
</dbReference>
<dbReference type="GO" id="GO:1990107">
    <property type="term" value="F:thiazole synthase activity"/>
    <property type="evidence" value="ECO:0007669"/>
    <property type="project" value="UniProtKB-EC"/>
</dbReference>
<dbReference type="GO" id="GO:0009229">
    <property type="term" value="P:thiamine diphosphate biosynthetic process"/>
    <property type="evidence" value="ECO:0007669"/>
    <property type="project" value="UniProtKB-UniRule"/>
</dbReference>
<dbReference type="CDD" id="cd04728">
    <property type="entry name" value="ThiG"/>
    <property type="match status" value="1"/>
</dbReference>
<dbReference type="FunFam" id="3.20.20.70:FF:000049">
    <property type="entry name" value="Thiazole synthase"/>
    <property type="match status" value="1"/>
</dbReference>
<dbReference type="Gene3D" id="3.20.20.70">
    <property type="entry name" value="Aldolase class I"/>
    <property type="match status" value="1"/>
</dbReference>
<dbReference type="HAMAP" id="MF_00443">
    <property type="entry name" value="ThiG"/>
    <property type="match status" value="1"/>
</dbReference>
<dbReference type="InterPro" id="IPR013785">
    <property type="entry name" value="Aldolase_TIM"/>
</dbReference>
<dbReference type="InterPro" id="IPR033983">
    <property type="entry name" value="Thiazole_synthase_ThiG"/>
</dbReference>
<dbReference type="InterPro" id="IPR008867">
    <property type="entry name" value="ThiG"/>
</dbReference>
<dbReference type="PANTHER" id="PTHR34266">
    <property type="entry name" value="THIAZOLE SYNTHASE"/>
    <property type="match status" value="1"/>
</dbReference>
<dbReference type="PANTHER" id="PTHR34266:SF2">
    <property type="entry name" value="THIAZOLE SYNTHASE"/>
    <property type="match status" value="1"/>
</dbReference>
<dbReference type="Pfam" id="PF05690">
    <property type="entry name" value="ThiG"/>
    <property type="match status" value="1"/>
</dbReference>
<dbReference type="SUPFAM" id="SSF110399">
    <property type="entry name" value="ThiG-like"/>
    <property type="match status" value="1"/>
</dbReference>
<reference key="1">
    <citation type="submission" date="2008-10" db="EMBL/GenBank/DDBJ databases">
        <title>Genome sequence of Bacillus anthracis str. CDC 684.</title>
        <authorList>
            <person name="Dodson R.J."/>
            <person name="Munk A.C."/>
            <person name="Brettin T."/>
            <person name="Bruce D."/>
            <person name="Detter C."/>
            <person name="Tapia R."/>
            <person name="Han C."/>
            <person name="Sutton G."/>
            <person name="Sims D."/>
        </authorList>
    </citation>
    <scope>NUCLEOTIDE SEQUENCE [LARGE SCALE GENOMIC DNA]</scope>
    <source>
        <strain>CDC 684 / NRRL 3495</strain>
    </source>
</reference>
<accession>C3LFA6</accession>
<name>THIG_BACAC</name>
<comment type="function">
    <text evidence="1">Catalyzes the rearrangement of 1-deoxy-D-xylulose 5-phosphate (DXP) to produce the thiazole phosphate moiety of thiamine. Sulfur is provided by the thiocarboxylate moiety of the carrier protein ThiS. In vitro, sulfur can be provided by H(2)S.</text>
</comment>
<comment type="catalytic activity">
    <reaction evidence="1">
        <text>[ThiS sulfur-carrier protein]-C-terminal-Gly-aminoethanethioate + 2-iminoacetate + 1-deoxy-D-xylulose 5-phosphate = [ThiS sulfur-carrier protein]-C-terminal Gly-Gly + 2-[(2R,5Z)-2-carboxy-4-methylthiazol-5(2H)-ylidene]ethyl phosphate + 2 H2O + H(+)</text>
        <dbReference type="Rhea" id="RHEA:26297"/>
        <dbReference type="Rhea" id="RHEA-COMP:12909"/>
        <dbReference type="Rhea" id="RHEA-COMP:19908"/>
        <dbReference type="ChEBI" id="CHEBI:15377"/>
        <dbReference type="ChEBI" id="CHEBI:15378"/>
        <dbReference type="ChEBI" id="CHEBI:57792"/>
        <dbReference type="ChEBI" id="CHEBI:62899"/>
        <dbReference type="ChEBI" id="CHEBI:77846"/>
        <dbReference type="ChEBI" id="CHEBI:90778"/>
        <dbReference type="ChEBI" id="CHEBI:232372"/>
        <dbReference type="EC" id="2.8.1.10"/>
    </reaction>
</comment>
<comment type="pathway">
    <text evidence="1">Cofactor biosynthesis; thiamine diphosphate biosynthesis.</text>
</comment>
<comment type="subunit">
    <text evidence="1">Homotetramer. Forms heterodimers with either ThiH or ThiS.</text>
</comment>
<comment type="subcellular location">
    <subcellularLocation>
        <location evidence="1">Cytoplasm</location>
    </subcellularLocation>
</comment>
<comment type="similarity">
    <text evidence="1">Belongs to the ThiG family.</text>
</comment>